<keyword id="KW-0067">ATP-binding</keyword>
<keyword id="KW-0963">Cytoplasm</keyword>
<keyword id="KW-0460">Magnesium</keyword>
<keyword id="KW-0479">Metal-binding</keyword>
<keyword id="KW-0547">Nucleotide-binding</keyword>
<keyword id="KW-0554">One-carbon metabolism</keyword>
<keyword id="KW-0630">Potassium</keyword>
<keyword id="KW-0808">Transferase</keyword>
<accession>Q5LJ26</accession>
<comment type="function">
    <text evidence="1">Catalyzes the formation of S-adenosylmethionine (AdoMet) from methionine and ATP. The overall synthetic reaction is composed of two sequential steps, AdoMet formation and the subsequent tripolyphosphate hydrolysis which occurs prior to release of AdoMet from the enzyme.</text>
</comment>
<comment type="catalytic activity">
    <reaction evidence="1">
        <text>L-methionine + ATP + H2O = S-adenosyl-L-methionine + phosphate + diphosphate</text>
        <dbReference type="Rhea" id="RHEA:21080"/>
        <dbReference type="ChEBI" id="CHEBI:15377"/>
        <dbReference type="ChEBI" id="CHEBI:30616"/>
        <dbReference type="ChEBI" id="CHEBI:33019"/>
        <dbReference type="ChEBI" id="CHEBI:43474"/>
        <dbReference type="ChEBI" id="CHEBI:57844"/>
        <dbReference type="ChEBI" id="CHEBI:59789"/>
        <dbReference type="EC" id="2.5.1.6"/>
    </reaction>
</comment>
<comment type="cofactor">
    <cofactor evidence="1">
        <name>Mg(2+)</name>
        <dbReference type="ChEBI" id="CHEBI:18420"/>
    </cofactor>
    <text evidence="1">Binds 2 divalent ions per subunit.</text>
</comment>
<comment type="cofactor">
    <cofactor evidence="1">
        <name>K(+)</name>
        <dbReference type="ChEBI" id="CHEBI:29103"/>
    </cofactor>
    <text evidence="1">Binds 1 potassium ion per subunit.</text>
</comment>
<comment type="pathway">
    <text evidence="1">Amino-acid biosynthesis; S-adenosyl-L-methionine biosynthesis; S-adenosyl-L-methionine from L-methionine: step 1/1.</text>
</comment>
<comment type="subunit">
    <text evidence="1">Homotetramer; dimer of dimers.</text>
</comment>
<comment type="subcellular location">
    <subcellularLocation>
        <location evidence="1">Cytoplasm</location>
    </subcellularLocation>
</comment>
<comment type="similarity">
    <text evidence="1">Belongs to the AdoMet synthase family.</text>
</comment>
<sequence>MGYLFTSESVSEGHPDKVADQISDAVLDKLLAYDPSSKVACETLVTTGQVVLAGEVKTGAYVDLQLIAREVIQKIGYTKGEYMFESNSCGVLSAIHEQSADINRGVEREDPMNQGAGDQGMMFGYATNETENYMPLSLDLAHRILLVLADIRREGKEMTYLRPDAKSQVTIEYDDNGTPVRIDTIVVSTQHDEFILPADNSAAAQLKADEEMLAVIRKDVIEVLMPRVIASINHPKVLALFNDHIIYHVNPTGKFVIGGPHGDTGLTGRKIIVDTYGGKGAHGGGAFSGKDPSKVDRSAAYAARHIAKNLVAAGVADEMLVQVSYAIGVARPINIYVNTYGRSNVKMSDGEIARKIDELFDLRPKAIEDRLKLRYPIYSETAAYGHMGREPQMVTKHFQSRYEGDRTMEVELFTWEKLDYVDKVKAAFGL</sequence>
<reference key="1">
    <citation type="journal article" date="2005" name="Science">
        <title>Extensive DNA inversions in the B. fragilis genome control variable gene expression.</title>
        <authorList>
            <person name="Cerdeno-Tarraga A.-M."/>
            <person name="Patrick S."/>
            <person name="Crossman L.C."/>
            <person name="Blakely G."/>
            <person name="Abratt V."/>
            <person name="Lennard N."/>
            <person name="Poxton I."/>
            <person name="Duerden B."/>
            <person name="Harris B."/>
            <person name="Quail M.A."/>
            <person name="Barron A."/>
            <person name="Clark L."/>
            <person name="Corton C."/>
            <person name="Doggett J."/>
            <person name="Holden M.T.G."/>
            <person name="Larke N."/>
            <person name="Line A."/>
            <person name="Lord A."/>
            <person name="Norbertczak H."/>
            <person name="Ormond D."/>
            <person name="Price C."/>
            <person name="Rabbinowitsch E."/>
            <person name="Woodward J."/>
            <person name="Barrell B.G."/>
            <person name="Parkhill J."/>
        </authorList>
    </citation>
    <scope>NUCLEOTIDE SEQUENCE [LARGE SCALE GENOMIC DNA]</scope>
    <source>
        <strain>ATCC 25285 / DSM 2151 / CCUG 4856 / JCM 11019 / LMG 10263 / NCTC 9343 / Onslow / VPI 2553 / EN-2</strain>
    </source>
</reference>
<name>METK_BACFN</name>
<evidence type="ECO:0000255" key="1">
    <source>
        <dbReference type="HAMAP-Rule" id="MF_00086"/>
    </source>
</evidence>
<proteinExistence type="inferred from homology"/>
<protein>
    <recommendedName>
        <fullName evidence="1">S-adenosylmethionine synthase</fullName>
        <shortName evidence="1">AdoMet synthase</shortName>
        <ecNumber evidence="1">2.5.1.6</ecNumber>
    </recommendedName>
    <alternativeName>
        <fullName evidence="1">MAT</fullName>
    </alternativeName>
    <alternativeName>
        <fullName evidence="1">Methionine adenosyltransferase</fullName>
    </alternativeName>
</protein>
<gene>
    <name evidence="1" type="primary">metK</name>
    <name type="ordered locus">BF0072</name>
</gene>
<dbReference type="EC" id="2.5.1.6" evidence="1"/>
<dbReference type="EMBL" id="CR626927">
    <property type="protein sequence ID" value="CAH05850.1"/>
    <property type="molecule type" value="Genomic_DNA"/>
</dbReference>
<dbReference type="RefSeq" id="WP_005783643.1">
    <property type="nucleotide sequence ID" value="NZ_UFTH01000001.1"/>
</dbReference>
<dbReference type="SMR" id="Q5LJ26"/>
<dbReference type="PaxDb" id="272559-BF9343_0071"/>
<dbReference type="GeneID" id="60366495"/>
<dbReference type="KEGG" id="bfs:BF9343_0071"/>
<dbReference type="eggNOG" id="COG0192">
    <property type="taxonomic scope" value="Bacteria"/>
</dbReference>
<dbReference type="HOGENOM" id="CLU_041802_1_1_10"/>
<dbReference type="UniPathway" id="UPA00315">
    <property type="reaction ID" value="UER00080"/>
</dbReference>
<dbReference type="Proteomes" id="UP000006731">
    <property type="component" value="Chromosome"/>
</dbReference>
<dbReference type="GO" id="GO:0005737">
    <property type="term" value="C:cytoplasm"/>
    <property type="evidence" value="ECO:0007669"/>
    <property type="project" value="UniProtKB-SubCell"/>
</dbReference>
<dbReference type="GO" id="GO:0005524">
    <property type="term" value="F:ATP binding"/>
    <property type="evidence" value="ECO:0007669"/>
    <property type="project" value="UniProtKB-UniRule"/>
</dbReference>
<dbReference type="GO" id="GO:0000287">
    <property type="term" value="F:magnesium ion binding"/>
    <property type="evidence" value="ECO:0007669"/>
    <property type="project" value="UniProtKB-UniRule"/>
</dbReference>
<dbReference type="GO" id="GO:0004478">
    <property type="term" value="F:methionine adenosyltransferase activity"/>
    <property type="evidence" value="ECO:0007669"/>
    <property type="project" value="UniProtKB-UniRule"/>
</dbReference>
<dbReference type="GO" id="GO:0006730">
    <property type="term" value="P:one-carbon metabolic process"/>
    <property type="evidence" value="ECO:0007669"/>
    <property type="project" value="UniProtKB-KW"/>
</dbReference>
<dbReference type="GO" id="GO:0006556">
    <property type="term" value="P:S-adenosylmethionine biosynthetic process"/>
    <property type="evidence" value="ECO:0007669"/>
    <property type="project" value="UniProtKB-UniRule"/>
</dbReference>
<dbReference type="CDD" id="cd18079">
    <property type="entry name" value="S-AdoMet_synt"/>
    <property type="match status" value="1"/>
</dbReference>
<dbReference type="FunFam" id="3.30.300.10:FF:000020">
    <property type="entry name" value="S-adenosylmethionine synthase"/>
    <property type="match status" value="1"/>
</dbReference>
<dbReference type="Gene3D" id="3.30.300.10">
    <property type="match status" value="3"/>
</dbReference>
<dbReference type="HAMAP" id="MF_00086">
    <property type="entry name" value="S_AdoMet_synth1"/>
    <property type="match status" value="1"/>
</dbReference>
<dbReference type="InterPro" id="IPR022631">
    <property type="entry name" value="ADOMET_SYNTHASE_CS"/>
</dbReference>
<dbReference type="InterPro" id="IPR022630">
    <property type="entry name" value="S-AdoMet_synt_C"/>
</dbReference>
<dbReference type="InterPro" id="IPR022629">
    <property type="entry name" value="S-AdoMet_synt_central"/>
</dbReference>
<dbReference type="InterPro" id="IPR022628">
    <property type="entry name" value="S-AdoMet_synt_N"/>
</dbReference>
<dbReference type="InterPro" id="IPR002133">
    <property type="entry name" value="S-AdoMet_synthetase"/>
</dbReference>
<dbReference type="InterPro" id="IPR022636">
    <property type="entry name" value="S-AdoMet_synthetase_sfam"/>
</dbReference>
<dbReference type="NCBIfam" id="TIGR01034">
    <property type="entry name" value="metK"/>
    <property type="match status" value="1"/>
</dbReference>
<dbReference type="PANTHER" id="PTHR11964">
    <property type="entry name" value="S-ADENOSYLMETHIONINE SYNTHETASE"/>
    <property type="match status" value="1"/>
</dbReference>
<dbReference type="Pfam" id="PF02773">
    <property type="entry name" value="S-AdoMet_synt_C"/>
    <property type="match status" value="1"/>
</dbReference>
<dbReference type="Pfam" id="PF02772">
    <property type="entry name" value="S-AdoMet_synt_M"/>
    <property type="match status" value="1"/>
</dbReference>
<dbReference type="Pfam" id="PF00438">
    <property type="entry name" value="S-AdoMet_synt_N"/>
    <property type="match status" value="1"/>
</dbReference>
<dbReference type="PIRSF" id="PIRSF000497">
    <property type="entry name" value="MAT"/>
    <property type="match status" value="1"/>
</dbReference>
<dbReference type="SUPFAM" id="SSF55973">
    <property type="entry name" value="S-adenosylmethionine synthetase"/>
    <property type="match status" value="3"/>
</dbReference>
<dbReference type="PROSITE" id="PS00376">
    <property type="entry name" value="ADOMET_SYNTHASE_1"/>
    <property type="match status" value="1"/>
</dbReference>
<dbReference type="PROSITE" id="PS00377">
    <property type="entry name" value="ADOMET_SYNTHASE_2"/>
    <property type="match status" value="1"/>
</dbReference>
<organism>
    <name type="scientific">Bacteroides fragilis (strain ATCC 25285 / DSM 2151 / CCUG 4856 / JCM 11019 / LMG 10263 / NCTC 9343 / Onslow / VPI 2553 / EN-2)</name>
    <dbReference type="NCBI Taxonomy" id="272559"/>
    <lineage>
        <taxon>Bacteria</taxon>
        <taxon>Pseudomonadati</taxon>
        <taxon>Bacteroidota</taxon>
        <taxon>Bacteroidia</taxon>
        <taxon>Bacteroidales</taxon>
        <taxon>Bacteroidaceae</taxon>
        <taxon>Bacteroides</taxon>
    </lineage>
</organism>
<feature type="chain" id="PRO_0000240981" description="S-adenosylmethionine synthase">
    <location>
        <begin position="1"/>
        <end position="430"/>
    </location>
</feature>
<feature type="region of interest" description="Flexible loop" evidence="1">
    <location>
        <begin position="98"/>
        <end position="108"/>
    </location>
</feature>
<feature type="binding site" description="in other chain" evidence="1">
    <location>
        <position position="14"/>
    </location>
    <ligand>
        <name>ATP</name>
        <dbReference type="ChEBI" id="CHEBI:30616"/>
        <note>ligand shared between two neighboring subunits</note>
    </ligand>
</feature>
<feature type="binding site" evidence="1">
    <location>
        <position position="16"/>
    </location>
    <ligand>
        <name>Mg(2+)</name>
        <dbReference type="ChEBI" id="CHEBI:18420"/>
    </ligand>
</feature>
<feature type="binding site" evidence="1">
    <location>
        <position position="42"/>
    </location>
    <ligand>
        <name>K(+)</name>
        <dbReference type="ChEBI" id="CHEBI:29103"/>
    </ligand>
</feature>
<feature type="binding site" description="in other chain" evidence="1">
    <location>
        <position position="55"/>
    </location>
    <ligand>
        <name>L-methionine</name>
        <dbReference type="ChEBI" id="CHEBI:57844"/>
        <note>ligand shared between two neighboring subunits</note>
    </ligand>
</feature>
<feature type="binding site" description="in other chain" evidence="1">
    <location>
        <position position="98"/>
    </location>
    <ligand>
        <name>L-methionine</name>
        <dbReference type="ChEBI" id="CHEBI:57844"/>
        <note>ligand shared between two neighboring subunits</note>
    </ligand>
</feature>
<feature type="binding site" description="in other chain" evidence="1">
    <location>
        <begin position="164"/>
        <end position="166"/>
    </location>
    <ligand>
        <name>ATP</name>
        <dbReference type="ChEBI" id="CHEBI:30616"/>
        <note>ligand shared between two neighboring subunits</note>
    </ligand>
</feature>
<feature type="binding site" description="in other chain" evidence="1">
    <location>
        <begin position="254"/>
        <end position="255"/>
    </location>
    <ligand>
        <name>ATP</name>
        <dbReference type="ChEBI" id="CHEBI:30616"/>
        <note>ligand shared between two neighboring subunits</note>
    </ligand>
</feature>
<feature type="binding site" evidence="1">
    <location>
        <position position="263"/>
    </location>
    <ligand>
        <name>ATP</name>
        <dbReference type="ChEBI" id="CHEBI:30616"/>
        <note>ligand shared between two neighboring subunits</note>
    </ligand>
</feature>
<feature type="binding site" evidence="1">
    <location>
        <position position="263"/>
    </location>
    <ligand>
        <name>L-methionine</name>
        <dbReference type="ChEBI" id="CHEBI:57844"/>
        <note>ligand shared between two neighboring subunits</note>
    </ligand>
</feature>
<feature type="binding site" description="in other chain" evidence="1">
    <location>
        <begin position="269"/>
        <end position="270"/>
    </location>
    <ligand>
        <name>ATP</name>
        <dbReference type="ChEBI" id="CHEBI:30616"/>
        <note>ligand shared between two neighboring subunits</note>
    </ligand>
</feature>
<feature type="binding site" evidence="1">
    <location>
        <position position="286"/>
    </location>
    <ligand>
        <name>ATP</name>
        <dbReference type="ChEBI" id="CHEBI:30616"/>
        <note>ligand shared between two neighboring subunits</note>
    </ligand>
</feature>
<feature type="binding site" evidence="1">
    <location>
        <position position="290"/>
    </location>
    <ligand>
        <name>ATP</name>
        <dbReference type="ChEBI" id="CHEBI:30616"/>
        <note>ligand shared between two neighboring subunits</note>
    </ligand>
</feature>
<feature type="binding site" description="in other chain" evidence="1">
    <location>
        <position position="294"/>
    </location>
    <ligand>
        <name>L-methionine</name>
        <dbReference type="ChEBI" id="CHEBI:57844"/>
        <note>ligand shared between two neighboring subunits</note>
    </ligand>
</feature>